<evidence type="ECO:0000255" key="1"/>
<evidence type="ECO:0000255" key="2">
    <source>
        <dbReference type="PROSITE-ProRule" id="PRU00024"/>
    </source>
</evidence>
<evidence type="ECO:0000255" key="3">
    <source>
        <dbReference type="PROSITE-ProRule" id="PRU00175"/>
    </source>
</evidence>
<evidence type="ECO:0000255" key="4">
    <source>
        <dbReference type="PROSITE-ProRule" id="PRU00548"/>
    </source>
</evidence>
<evidence type="ECO:0000305" key="5"/>
<comment type="similarity">
    <text evidence="5">Belongs to the TRIM/RBCC family.</text>
</comment>
<name>TR64C_HUMAN</name>
<keyword id="KW-0175">Coiled coil</keyword>
<keyword id="KW-0479">Metal-binding</keyword>
<keyword id="KW-1185">Reference proteome</keyword>
<keyword id="KW-0862">Zinc</keyword>
<keyword id="KW-0863">Zinc-finger</keyword>
<sequence length="450" mass="51540">MDSDTLRVFQNELICCICVNYFIDPVTTDCVHSFCRPCLCLCSEEGRAPMRCPLCRKISEKPNFNTNVALKKLASLARQTRPQNINSSDNICVLHEETKELFCEADKRLLCGPCSESPEHMAHSHSPIGWAAEECRVQKLIKEMDYLWKINQETQNNLNQETSKFCSLVDYVSLRKVIITIQYQKMHIFLDEEEQRHLQALEREAKELFQQLQDSQVRMTQHLEGMKDMYRELWETYHMPDVELLQDVGNISARTDLAQMPKPQPVNPELTSWCITGVLDMLNNFRVDNALSTEMTPCYISLSEDVRRVIFGDDHRSAPMDPQGVESFAVWCAQAFTSGKHYWEVDVTHSSNWILGVCRDSRTADTNIVIDSDKTFFSISSKTSNHYSLSTNSPPLIQYVQRPLGWVGVFLDYDNGSVSFFDVSKGSLIYGFPPSSFSSPLRPFFCFGCT</sequence>
<gene>
    <name type="primary">TRIM64C</name>
</gene>
<dbReference type="EMBL" id="AC084851">
    <property type="status" value="NOT_ANNOTATED_CDS"/>
    <property type="molecule type" value="Genomic_DNA"/>
</dbReference>
<dbReference type="CCDS" id="CCDS73287.1"/>
<dbReference type="RefSeq" id="NP_001193560.1">
    <property type="nucleotide sequence ID" value="NM_001206631.1"/>
</dbReference>
<dbReference type="SMR" id="A6NLI5"/>
<dbReference type="FunCoup" id="A6NLI5">
    <property type="interactions" value="9"/>
</dbReference>
<dbReference type="IntAct" id="A6NLI5">
    <property type="interactions" value="1"/>
</dbReference>
<dbReference type="BioMuta" id="TRIM64C"/>
<dbReference type="PaxDb" id="9606-ENSP00000481815"/>
<dbReference type="PeptideAtlas" id="A6NLI5"/>
<dbReference type="ProteomicsDB" id="1479"/>
<dbReference type="Antibodypedia" id="63167">
    <property type="antibodies" value="3 antibodies from 3 providers"/>
</dbReference>
<dbReference type="DNASU" id="646754"/>
<dbReference type="Ensembl" id="ENST00000617704.1">
    <property type="protein sequence ID" value="ENSP00000481815.1"/>
    <property type="gene ID" value="ENSG00000214891.9"/>
</dbReference>
<dbReference type="GeneID" id="646754"/>
<dbReference type="KEGG" id="hsa:646754"/>
<dbReference type="MANE-Select" id="ENST00000617704.1">
    <property type="protein sequence ID" value="ENSP00000481815.1"/>
    <property type="RefSeq nucleotide sequence ID" value="NM_001206631.1"/>
    <property type="RefSeq protein sequence ID" value="NP_001193560.1"/>
</dbReference>
<dbReference type="AGR" id="HGNC:37148"/>
<dbReference type="CTD" id="646754"/>
<dbReference type="GeneCards" id="TRIM64C"/>
<dbReference type="HGNC" id="HGNC:37148">
    <property type="gene designation" value="TRIM64C"/>
</dbReference>
<dbReference type="HPA" id="ENSG00000214891">
    <property type="expression patterns" value="Not detected"/>
</dbReference>
<dbReference type="neXtProt" id="NX_A6NLI5"/>
<dbReference type="VEuPathDB" id="HostDB:ENSG00000214891"/>
<dbReference type="eggNOG" id="KOG2177">
    <property type="taxonomic scope" value="Eukaryota"/>
</dbReference>
<dbReference type="GeneTree" id="ENSGT00940000163440"/>
<dbReference type="InParanoid" id="A6NLI5"/>
<dbReference type="OMA" id="RELTGMC"/>
<dbReference type="OrthoDB" id="9521923at2759"/>
<dbReference type="PAN-GO" id="A6NLI5">
    <property type="GO annotations" value="5 GO annotations based on evolutionary models"/>
</dbReference>
<dbReference type="PhylomeDB" id="A6NLI5"/>
<dbReference type="PathwayCommons" id="A6NLI5"/>
<dbReference type="SignaLink" id="A6NLI5"/>
<dbReference type="SIGNOR" id="A6NLI5"/>
<dbReference type="BioGRID-ORCS" id="646754">
    <property type="hits" value="5 hits in 320 CRISPR screens"/>
</dbReference>
<dbReference type="GenomeRNAi" id="646754"/>
<dbReference type="Pharos" id="A6NLI5">
    <property type="development level" value="Tdark"/>
</dbReference>
<dbReference type="PRO" id="PR:A6NLI5"/>
<dbReference type="Proteomes" id="UP000005640">
    <property type="component" value="Chromosome 11"/>
</dbReference>
<dbReference type="RNAct" id="A6NLI5">
    <property type="molecule type" value="protein"/>
</dbReference>
<dbReference type="Bgee" id="ENSG00000214891">
    <property type="expression patterns" value="Expressed in primordial germ cell in gonad"/>
</dbReference>
<dbReference type="GO" id="GO:0005737">
    <property type="term" value="C:cytoplasm"/>
    <property type="evidence" value="ECO:0000318"/>
    <property type="project" value="GO_Central"/>
</dbReference>
<dbReference type="GO" id="GO:0061630">
    <property type="term" value="F:ubiquitin protein ligase activity"/>
    <property type="evidence" value="ECO:0000318"/>
    <property type="project" value="GO_Central"/>
</dbReference>
<dbReference type="GO" id="GO:0008270">
    <property type="term" value="F:zinc ion binding"/>
    <property type="evidence" value="ECO:0007669"/>
    <property type="project" value="UniProtKB-KW"/>
</dbReference>
<dbReference type="GO" id="GO:0045087">
    <property type="term" value="P:innate immune response"/>
    <property type="evidence" value="ECO:0000318"/>
    <property type="project" value="GO_Central"/>
</dbReference>
<dbReference type="GO" id="GO:0010468">
    <property type="term" value="P:regulation of gene expression"/>
    <property type="evidence" value="ECO:0000318"/>
    <property type="project" value="GO_Central"/>
</dbReference>
<dbReference type="CDD" id="cd19783">
    <property type="entry name" value="Bbox2_TRIM43-like"/>
    <property type="match status" value="1"/>
</dbReference>
<dbReference type="Gene3D" id="2.60.120.920">
    <property type="match status" value="1"/>
</dbReference>
<dbReference type="Gene3D" id="3.30.160.60">
    <property type="entry name" value="Classic Zinc Finger"/>
    <property type="match status" value="1"/>
</dbReference>
<dbReference type="Gene3D" id="3.30.40.10">
    <property type="entry name" value="Zinc/RING finger domain, C3HC4 (zinc finger)"/>
    <property type="match status" value="1"/>
</dbReference>
<dbReference type="InterPro" id="IPR001870">
    <property type="entry name" value="B30.2/SPRY"/>
</dbReference>
<dbReference type="InterPro" id="IPR043136">
    <property type="entry name" value="B30.2/SPRY_sf"/>
</dbReference>
<dbReference type="InterPro" id="IPR003879">
    <property type="entry name" value="Butyrophylin_SPRY"/>
</dbReference>
<dbReference type="InterPro" id="IPR013320">
    <property type="entry name" value="ConA-like_dom_sf"/>
</dbReference>
<dbReference type="InterPro" id="IPR003877">
    <property type="entry name" value="SPRY_dom"/>
</dbReference>
<dbReference type="InterPro" id="IPR050143">
    <property type="entry name" value="TRIM/RBCC"/>
</dbReference>
<dbReference type="InterPro" id="IPR000315">
    <property type="entry name" value="Znf_B-box"/>
</dbReference>
<dbReference type="InterPro" id="IPR001841">
    <property type="entry name" value="Znf_RING"/>
</dbReference>
<dbReference type="InterPro" id="IPR013083">
    <property type="entry name" value="Znf_RING/FYVE/PHD"/>
</dbReference>
<dbReference type="InterPro" id="IPR017907">
    <property type="entry name" value="Znf_RING_CS"/>
</dbReference>
<dbReference type="PANTHER" id="PTHR24103">
    <property type="entry name" value="E3 UBIQUITIN-PROTEIN LIGASE TRIM"/>
    <property type="match status" value="1"/>
</dbReference>
<dbReference type="Pfam" id="PF00622">
    <property type="entry name" value="SPRY"/>
    <property type="match status" value="1"/>
</dbReference>
<dbReference type="Pfam" id="PF00643">
    <property type="entry name" value="zf-B_box"/>
    <property type="match status" value="1"/>
</dbReference>
<dbReference type="PRINTS" id="PR01407">
    <property type="entry name" value="BUTYPHLNCDUF"/>
</dbReference>
<dbReference type="SMART" id="SM00336">
    <property type="entry name" value="BBOX"/>
    <property type="match status" value="1"/>
</dbReference>
<dbReference type="SMART" id="SM00449">
    <property type="entry name" value="SPRY"/>
    <property type="match status" value="1"/>
</dbReference>
<dbReference type="SUPFAM" id="SSF57845">
    <property type="entry name" value="B-box zinc-binding domain"/>
    <property type="match status" value="1"/>
</dbReference>
<dbReference type="SUPFAM" id="SSF49899">
    <property type="entry name" value="Concanavalin A-like lectins/glucanases"/>
    <property type="match status" value="1"/>
</dbReference>
<dbReference type="SUPFAM" id="SSF57850">
    <property type="entry name" value="RING/U-box"/>
    <property type="match status" value="1"/>
</dbReference>
<dbReference type="PROSITE" id="PS50188">
    <property type="entry name" value="B302_SPRY"/>
    <property type="match status" value="1"/>
</dbReference>
<dbReference type="PROSITE" id="PS50119">
    <property type="entry name" value="ZF_BBOX"/>
    <property type="match status" value="1"/>
</dbReference>
<dbReference type="PROSITE" id="PS00518">
    <property type="entry name" value="ZF_RING_1"/>
    <property type="match status" value="1"/>
</dbReference>
<dbReference type="PROSITE" id="PS50089">
    <property type="entry name" value="ZF_RING_2"/>
    <property type="match status" value="1"/>
</dbReference>
<protein>
    <recommendedName>
        <fullName>Tripartite motif-containing protein 64C</fullName>
    </recommendedName>
</protein>
<organism>
    <name type="scientific">Homo sapiens</name>
    <name type="common">Human</name>
    <dbReference type="NCBI Taxonomy" id="9606"/>
    <lineage>
        <taxon>Eukaryota</taxon>
        <taxon>Metazoa</taxon>
        <taxon>Chordata</taxon>
        <taxon>Craniata</taxon>
        <taxon>Vertebrata</taxon>
        <taxon>Euteleostomi</taxon>
        <taxon>Mammalia</taxon>
        <taxon>Eutheria</taxon>
        <taxon>Euarchontoglires</taxon>
        <taxon>Primates</taxon>
        <taxon>Haplorrhini</taxon>
        <taxon>Catarrhini</taxon>
        <taxon>Hominidae</taxon>
        <taxon>Homo</taxon>
    </lineage>
</organism>
<accession>A6NLI5</accession>
<accession>A0A087WYH8</accession>
<reference key="1">
    <citation type="journal article" date="2006" name="Nature">
        <title>Human chromosome 11 DNA sequence and analysis including novel gene identification.</title>
        <authorList>
            <person name="Taylor T.D."/>
            <person name="Noguchi H."/>
            <person name="Totoki Y."/>
            <person name="Toyoda A."/>
            <person name="Kuroki Y."/>
            <person name="Dewar K."/>
            <person name="Lloyd C."/>
            <person name="Itoh T."/>
            <person name="Takeda T."/>
            <person name="Kim D.-W."/>
            <person name="She X."/>
            <person name="Barlow K.F."/>
            <person name="Bloom T."/>
            <person name="Bruford E."/>
            <person name="Chang J.L."/>
            <person name="Cuomo C.A."/>
            <person name="Eichler E."/>
            <person name="FitzGerald M.G."/>
            <person name="Jaffe D.B."/>
            <person name="LaButti K."/>
            <person name="Nicol R."/>
            <person name="Park H.-S."/>
            <person name="Seaman C."/>
            <person name="Sougnez C."/>
            <person name="Yang X."/>
            <person name="Zimmer A.R."/>
            <person name="Zody M.C."/>
            <person name="Birren B.W."/>
            <person name="Nusbaum C."/>
            <person name="Fujiyama A."/>
            <person name="Hattori M."/>
            <person name="Rogers J."/>
            <person name="Lander E.S."/>
            <person name="Sakaki Y."/>
        </authorList>
    </citation>
    <scope>NUCLEOTIDE SEQUENCE [LARGE SCALE GENOMIC DNA]</scope>
</reference>
<proteinExistence type="inferred from homology"/>
<feature type="chain" id="PRO_0000340248" description="Tripartite motif-containing protein 64C">
    <location>
        <begin position="1"/>
        <end position="450"/>
    </location>
</feature>
<feature type="domain" description="B30.2/SPRY" evidence="4">
    <location>
        <begin position="269"/>
        <end position="450"/>
    </location>
</feature>
<feature type="zinc finger region" description="RING-type" evidence="3">
    <location>
        <begin position="15"/>
        <end position="56"/>
    </location>
</feature>
<feature type="zinc finger region" description="B box-type" evidence="2">
    <location>
        <begin position="87"/>
        <end position="128"/>
    </location>
</feature>
<feature type="coiled-coil region" evidence="1">
    <location>
        <begin position="191"/>
        <end position="218"/>
    </location>
</feature>
<feature type="binding site" evidence="2">
    <location>
        <position position="92"/>
    </location>
    <ligand>
        <name>Zn(2+)</name>
        <dbReference type="ChEBI" id="CHEBI:29105"/>
    </ligand>
</feature>
<feature type="binding site" evidence="2">
    <location>
        <position position="95"/>
    </location>
    <ligand>
        <name>Zn(2+)</name>
        <dbReference type="ChEBI" id="CHEBI:29105"/>
    </ligand>
</feature>
<feature type="binding site" evidence="2">
    <location>
        <position position="114"/>
    </location>
    <ligand>
        <name>Zn(2+)</name>
        <dbReference type="ChEBI" id="CHEBI:29105"/>
    </ligand>
</feature>
<feature type="binding site" evidence="2">
    <location>
        <position position="120"/>
    </location>
    <ligand>
        <name>Zn(2+)</name>
        <dbReference type="ChEBI" id="CHEBI:29105"/>
    </ligand>
</feature>